<keyword id="KW-0028">Amino-acid biosynthesis</keyword>
<keyword id="KW-0963">Cytoplasm</keyword>
<keyword id="KW-0413">Isomerase</keyword>
<keyword id="KW-0457">Lysine biosynthesis</keyword>
<evidence type="ECO:0000255" key="1">
    <source>
        <dbReference type="HAMAP-Rule" id="MF_00197"/>
    </source>
</evidence>
<evidence type="ECO:0000256" key="2">
    <source>
        <dbReference type="SAM" id="MobiDB-lite"/>
    </source>
</evidence>
<name>DAPF_BRUSU</name>
<proteinExistence type="inferred from homology"/>
<gene>
    <name evidence="1" type="primary">dapF</name>
    <name type="ordered locus">BR1932</name>
    <name type="ordered locus">BS1330_I1926</name>
</gene>
<protein>
    <recommendedName>
        <fullName evidence="1">Diaminopimelate epimerase</fullName>
        <shortName evidence="1">DAP epimerase</shortName>
        <ecNumber evidence="1">5.1.1.7</ecNumber>
    </recommendedName>
    <alternativeName>
        <fullName evidence="1">PLP-independent amino acid racemase</fullName>
    </alternativeName>
</protein>
<organism>
    <name type="scientific">Brucella suis biovar 1 (strain 1330)</name>
    <dbReference type="NCBI Taxonomy" id="204722"/>
    <lineage>
        <taxon>Bacteria</taxon>
        <taxon>Pseudomonadati</taxon>
        <taxon>Pseudomonadota</taxon>
        <taxon>Alphaproteobacteria</taxon>
        <taxon>Hyphomicrobiales</taxon>
        <taxon>Brucellaceae</taxon>
        <taxon>Brucella/Ochrobactrum group</taxon>
        <taxon>Brucella</taxon>
    </lineage>
</organism>
<comment type="function">
    <text evidence="1">Catalyzes the stereoinversion of LL-2,6-diaminopimelate (L,L-DAP) to meso-diaminopimelate (meso-DAP), a precursor of L-lysine and an essential component of the bacterial peptidoglycan.</text>
</comment>
<comment type="catalytic activity">
    <reaction evidence="1">
        <text>(2S,6S)-2,6-diaminopimelate = meso-2,6-diaminopimelate</text>
        <dbReference type="Rhea" id="RHEA:15393"/>
        <dbReference type="ChEBI" id="CHEBI:57609"/>
        <dbReference type="ChEBI" id="CHEBI:57791"/>
        <dbReference type="EC" id="5.1.1.7"/>
    </reaction>
</comment>
<comment type="pathway">
    <text evidence="1">Amino-acid biosynthesis; L-lysine biosynthesis via DAP pathway; DL-2,6-diaminopimelate from LL-2,6-diaminopimelate: step 1/1.</text>
</comment>
<comment type="subunit">
    <text evidence="1">Homodimer.</text>
</comment>
<comment type="subcellular location">
    <subcellularLocation>
        <location evidence="1">Cytoplasm</location>
    </subcellularLocation>
</comment>
<comment type="similarity">
    <text evidence="1">Belongs to the diaminopimelate epimerase family.</text>
</comment>
<dbReference type="EC" id="5.1.1.7" evidence="1"/>
<dbReference type="EMBL" id="AE014291">
    <property type="protein sequence ID" value="AAN30824.1"/>
    <property type="molecule type" value="Genomic_DNA"/>
</dbReference>
<dbReference type="EMBL" id="CP002997">
    <property type="protein sequence ID" value="AEM19241.1"/>
    <property type="molecule type" value="Genomic_DNA"/>
</dbReference>
<dbReference type="RefSeq" id="WP_002966997.1">
    <property type="nucleotide sequence ID" value="NZ_KN046804.1"/>
</dbReference>
<dbReference type="SMR" id="Q8FYF0"/>
<dbReference type="GeneID" id="93017739"/>
<dbReference type="KEGG" id="bms:BR1932"/>
<dbReference type="KEGG" id="bsi:BS1330_I1926"/>
<dbReference type="PATRIC" id="fig|204722.22.peg.2082"/>
<dbReference type="HOGENOM" id="CLU_053306_1_0_5"/>
<dbReference type="PhylomeDB" id="Q8FYF0"/>
<dbReference type="UniPathway" id="UPA00034">
    <property type="reaction ID" value="UER00025"/>
</dbReference>
<dbReference type="Proteomes" id="UP000007104">
    <property type="component" value="Chromosome I"/>
</dbReference>
<dbReference type="GO" id="GO:0005829">
    <property type="term" value="C:cytosol"/>
    <property type="evidence" value="ECO:0007669"/>
    <property type="project" value="TreeGrafter"/>
</dbReference>
<dbReference type="GO" id="GO:0008837">
    <property type="term" value="F:diaminopimelate epimerase activity"/>
    <property type="evidence" value="ECO:0007669"/>
    <property type="project" value="UniProtKB-UniRule"/>
</dbReference>
<dbReference type="GO" id="GO:0009089">
    <property type="term" value="P:lysine biosynthetic process via diaminopimelate"/>
    <property type="evidence" value="ECO:0007669"/>
    <property type="project" value="UniProtKB-UniRule"/>
</dbReference>
<dbReference type="Gene3D" id="3.10.310.10">
    <property type="entry name" value="Diaminopimelate Epimerase, Chain A, domain 1"/>
    <property type="match status" value="2"/>
</dbReference>
<dbReference type="HAMAP" id="MF_00197">
    <property type="entry name" value="DAP_epimerase"/>
    <property type="match status" value="1"/>
</dbReference>
<dbReference type="InterPro" id="IPR018510">
    <property type="entry name" value="DAP_epimerase_AS"/>
</dbReference>
<dbReference type="InterPro" id="IPR001653">
    <property type="entry name" value="DAP_epimerase_DapF"/>
</dbReference>
<dbReference type="NCBIfam" id="TIGR00652">
    <property type="entry name" value="DapF"/>
    <property type="match status" value="1"/>
</dbReference>
<dbReference type="PANTHER" id="PTHR31689:SF0">
    <property type="entry name" value="DIAMINOPIMELATE EPIMERASE"/>
    <property type="match status" value="1"/>
</dbReference>
<dbReference type="PANTHER" id="PTHR31689">
    <property type="entry name" value="DIAMINOPIMELATE EPIMERASE, CHLOROPLASTIC"/>
    <property type="match status" value="1"/>
</dbReference>
<dbReference type="Pfam" id="PF01678">
    <property type="entry name" value="DAP_epimerase"/>
    <property type="match status" value="2"/>
</dbReference>
<dbReference type="SUPFAM" id="SSF54506">
    <property type="entry name" value="Diaminopimelate epimerase-like"/>
    <property type="match status" value="2"/>
</dbReference>
<dbReference type="PROSITE" id="PS01326">
    <property type="entry name" value="DAP_EPIMERASE"/>
    <property type="match status" value="1"/>
</dbReference>
<sequence length="303" mass="32310">MATKAAFARMNGLGNQIIVADMRGRADSITSAAAIRLASDSETAFDQIMAIHDPRTPGTDYYIAIINCDGTQAQACGNGTRCVVQALAAETGRHAFTFETRAGILTATEHDDGLISVDMGTPRFDWQDIPLAQAVADTRKIELQVGPADAPVLHSPSIASMGNPHAVFWVDKDVWSYELDKFGPLLENHPIFPERANISIAHVTSSDTIDLRTWERGAGLTRACGSAACAAAVSAARTGRTGRKVTVNVPGGPLLIEWRDDDHVMMTGPAEWEFSGTFDPATGEWSRDTQGLQGSGNADRGAA</sequence>
<reference key="1">
    <citation type="journal article" date="2002" name="Proc. Natl. Acad. Sci. U.S.A.">
        <title>The Brucella suis genome reveals fundamental similarities between animal and plant pathogens and symbionts.</title>
        <authorList>
            <person name="Paulsen I.T."/>
            <person name="Seshadri R."/>
            <person name="Nelson K.E."/>
            <person name="Eisen J.A."/>
            <person name="Heidelberg J.F."/>
            <person name="Read T.D."/>
            <person name="Dodson R.J."/>
            <person name="Umayam L.A."/>
            <person name="Brinkac L.M."/>
            <person name="Beanan M.J."/>
            <person name="Daugherty S.C."/>
            <person name="DeBoy R.T."/>
            <person name="Durkin A.S."/>
            <person name="Kolonay J.F."/>
            <person name="Madupu R."/>
            <person name="Nelson W.C."/>
            <person name="Ayodeji B."/>
            <person name="Kraul M."/>
            <person name="Shetty J."/>
            <person name="Malek J.A."/>
            <person name="Van Aken S.E."/>
            <person name="Riedmuller S."/>
            <person name="Tettelin H."/>
            <person name="Gill S.R."/>
            <person name="White O."/>
            <person name="Salzberg S.L."/>
            <person name="Hoover D.L."/>
            <person name="Lindler L.E."/>
            <person name="Halling S.M."/>
            <person name="Boyle S.M."/>
            <person name="Fraser C.M."/>
        </authorList>
    </citation>
    <scope>NUCLEOTIDE SEQUENCE [LARGE SCALE GENOMIC DNA]</scope>
    <source>
        <strain>1330</strain>
    </source>
</reference>
<reference key="2">
    <citation type="journal article" date="2011" name="J. Bacteriol.">
        <title>Revised genome sequence of Brucella suis 1330.</title>
        <authorList>
            <person name="Tae H."/>
            <person name="Shallom S."/>
            <person name="Settlage R."/>
            <person name="Preston D."/>
            <person name="Adams L.G."/>
            <person name="Garner H.R."/>
        </authorList>
    </citation>
    <scope>NUCLEOTIDE SEQUENCE [LARGE SCALE GENOMIC DNA]</scope>
    <source>
        <strain>1330</strain>
    </source>
</reference>
<feature type="chain" id="PRO_0000149824" description="Diaminopimelate epimerase">
    <location>
        <begin position="1"/>
        <end position="303"/>
    </location>
</feature>
<feature type="region of interest" description="Disordered" evidence="2">
    <location>
        <begin position="278"/>
        <end position="303"/>
    </location>
</feature>
<feature type="active site" description="Proton donor" evidence="1">
    <location>
        <position position="76"/>
    </location>
</feature>
<feature type="active site" description="Proton acceptor" evidence="1">
    <location>
        <position position="224"/>
    </location>
</feature>
<feature type="binding site" evidence="1">
    <location>
        <position position="15"/>
    </location>
    <ligand>
        <name>substrate</name>
    </ligand>
</feature>
<feature type="binding site" evidence="1">
    <location>
        <position position="47"/>
    </location>
    <ligand>
        <name>substrate</name>
    </ligand>
</feature>
<feature type="binding site" evidence="1">
    <location>
        <position position="67"/>
    </location>
    <ligand>
        <name>substrate</name>
    </ligand>
</feature>
<feature type="binding site" evidence="1">
    <location>
        <begin position="77"/>
        <end position="78"/>
    </location>
    <ligand>
        <name>substrate</name>
    </ligand>
</feature>
<feature type="binding site" evidence="1">
    <location>
        <position position="163"/>
    </location>
    <ligand>
        <name>substrate</name>
    </ligand>
</feature>
<feature type="binding site" evidence="1">
    <location>
        <position position="197"/>
    </location>
    <ligand>
        <name>substrate</name>
    </ligand>
</feature>
<feature type="binding site" evidence="1">
    <location>
        <begin position="215"/>
        <end position="216"/>
    </location>
    <ligand>
        <name>substrate</name>
    </ligand>
</feature>
<feature type="binding site" evidence="1">
    <location>
        <begin position="225"/>
        <end position="226"/>
    </location>
    <ligand>
        <name>substrate</name>
    </ligand>
</feature>
<feature type="site" description="Could be important to modulate the pK values of the two catalytic cysteine residues" evidence="1">
    <location>
        <position position="165"/>
    </location>
</feature>
<feature type="site" description="Could be important to modulate the pK values of the two catalytic cysteine residues" evidence="1">
    <location>
        <position position="215"/>
    </location>
</feature>
<accession>Q8FYF0</accession>
<accession>G0K875</accession>